<reference key="1">
    <citation type="submission" date="2003-10" db="EMBL/GenBank/DDBJ databases">
        <authorList>
            <consortium name="NIH - Xenopus Gene Collection (XGC) project"/>
        </authorList>
    </citation>
    <scope>NUCLEOTIDE SEQUENCE [LARGE SCALE MRNA]</scope>
    <source>
        <tissue>Kidney</tissue>
    </source>
</reference>
<feature type="chain" id="PRO_0000324343" description="Protein CDKN2AIP homolog B">
    <location>
        <begin position="1"/>
        <end position="413"/>
    </location>
</feature>
<feature type="domain" description="XRN2-binding (XTBD)" evidence="2">
    <location>
        <begin position="21"/>
        <end position="118"/>
    </location>
</feature>
<feature type="region of interest" description="Disordered" evidence="3">
    <location>
        <begin position="118"/>
        <end position="266"/>
    </location>
</feature>
<feature type="compositionally biased region" description="Basic and acidic residues" evidence="3">
    <location>
        <begin position="183"/>
        <end position="193"/>
    </location>
</feature>
<evidence type="ECO:0000250" key="1">
    <source>
        <dbReference type="UniProtKB" id="Q9NXV6"/>
    </source>
</evidence>
<evidence type="ECO:0000255" key="2">
    <source>
        <dbReference type="PROSITE-ProRule" id="PRU01171"/>
    </source>
</evidence>
<evidence type="ECO:0000256" key="3">
    <source>
        <dbReference type="SAM" id="MobiDB-lite"/>
    </source>
</evidence>
<evidence type="ECO:0000305" key="4"/>
<accession>Q6PAV5</accession>
<protein>
    <recommendedName>
        <fullName>Protein CDKN2AIP homolog B</fullName>
    </recommendedName>
</protein>
<sequence length="413" mass="46648">MASEDEVSEFLGQNPETAAWLERVRGQCESDKLWRYRREFILRNLSDVCGEGEIPPPPETNHKELDRLLAYSMVWANHVFTGCRYPIQVIEKVLKMAENIKVTDAPTHTTRDELVAKVKKRGNSSSNEGVEELPRKKKKSNDHGARESSYIDDTVEIRNQPGDARERSSGKICDGYIPSTSLNKREAHSRTDVNTEFYEESGNGRPLPVSKAKSSLNPPEEAGYKHAATQGRKSHSDSRYQTAVKGPSQSSDNALKPTRRFTTEHTKERQPFFNRLYKTVAWKLVSAGGFNANLNHEELLNTSIESLKATLEIAFVPLKDLADFPQNKTSQENTVCELRCKSVYLGMGCGKTMDTAKAVAFREAVKLFLKKKVVVRICRRKFNGRDVEDLVLVDEEFRPPNLPPAVKNPHELV</sequence>
<organism>
    <name type="scientific">Xenopus laevis</name>
    <name type="common">African clawed frog</name>
    <dbReference type="NCBI Taxonomy" id="8355"/>
    <lineage>
        <taxon>Eukaryota</taxon>
        <taxon>Metazoa</taxon>
        <taxon>Chordata</taxon>
        <taxon>Craniata</taxon>
        <taxon>Vertebrata</taxon>
        <taxon>Euteleostomi</taxon>
        <taxon>Amphibia</taxon>
        <taxon>Batrachia</taxon>
        <taxon>Anura</taxon>
        <taxon>Pipoidea</taxon>
        <taxon>Pipidae</taxon>
        <taxon>Xenopodinae</taxon>
        <taxon>Xenopus</taxon>
        <taxon>Xenopus</taxon>
    </lineage>
</organism>
<dbReference type="EMBL" id="BC060029">
    <property type="protein sequence ID" value="AAH60029.1"/>
    <property type="molecule type" value="mRNA"/>
</dbReference>
<dbReference type="RefSeq" id="NP_001083190.1">
    <property type="nucleotide sequence ID" value="NM_001089721.1"/>
</dbReference>
<dbReference type="SMR" id="Q6PAV5"/>
<dbReference type="DNASU" id="398792"/>
<dbReference type="GeneID" id="398792"/>
<dbReference type="KEGG" id="xla:398792"/>
<dbReference type="AGR" id="Xenbase:XB-GENE-6255427"/>
<dbReference type="CTD" id="398792"/>
<dbReference type="Xenbase" id="XB-GENE-6255427">
    <property type="gene designation" value="cdkn2aip.S"/>
</dbReference>
<dbReference type="OrthoDB" id="2359216at2759"/>
<dbReference type="Proteomes" id="UP000186698">
    <property type="component" value="Chromosome 1S"/>
</dbReference>
<dbReference type="Bgee" id="398792">
    <property type="expression patterns" value="Expressed in blastula and 19 other cell types or tissues"/>
</dbReference>
<dbReference type="GO" id="GO:0005730">
    <property type="term" value="C:nucleolus"/>
    <property type="evidence" value="ECO:0000318"/>
    <property type="project" value="GO_Central"/>
</dbReference>
<dbReference type="GO" id="GO:0005654">
    <property type="term" value="C:nucleoplasm"/>
    <property type="evidence" value="ECO:0000318"/>
    <property type="project" value="GO_Central"/>
</dbReference>
<dbReference type="InterPro" id="IPR021859">
    <property type="entry name" value="XTBD"/>
</dbReference>
<dbReference type="PANTHER" id="PTHR16148:SF11">
    <property type="entry name" value="CDKN2A-INTERACTING PROTEIN"/>
    <property type="match status" value="1"/>
</dbReference>
<dbReference type="PANTHER" id="PTHR16148">
    <property type="entry name" value="NF-KAPPA-B-REPRESSING FACTOR-RELATED"/>
    <property type="match status" value="1"/>
</dbReference>
<dbReference type="Pfam" id="PF11952">
    <property type="entry name" value="XTBD"/>
    <property type="match status" value="1"/>
</dbReference>
<dbReference type="PROSITE" id="PS51827">
    <property type="entry name" value="XTBD"/>
    <property type="match status" value="1"/>
</dbReference>
<gene>
    <name type="primary">cdkn2aip-b</name>
</gene>
<keyword id="KW-0539">Nucleus</keyword>
<keyword id="KW-1185">Reference proteome</keyword>
<name>CARFB_XENLA</name>
<comment type="function">
    <text evidence="1">May regulate DNA damage response and cell proliferation.</text>
</comment>
<comment type="subcellular location">
    <subcellularLocation>
        <location evidence="1">Nucleus</location>
        <location evidence="1">Nucleoplasm</location>
    </subcellularLocation>
</comment>
<comment type="similarity">
    <text evidence="4">Belongs to the CARF family.</text>
</comment>
<proteinExistence type="evidence at transcript level"/>